<gene>
    <name type="ordered locus">At5g56900</name>
    <name type="ORF">MHM17.1</name>
</gene>
<comment type="alternative products">
    <event type="alternative splicing"/>
    <isoform>
        <id>Q84WU9-1</id>
        <name>1</name>
        <sequence type="displayed"/>
    </isoform>
    <text>A number of isoforms are produced. According to EST sequences.</text>
</comment>
<comment type="sequence caution" evidence="3">
    <conflict type="erroneous gene model prediction">
        <sequence resource="EMBL-CDS" id="BAA97020"/>
    </conflict>
</comment>
<protein>
    <recommendedName>
        <fullName>Zinc finger CCCH domain-containing protein 64</fullName>
        <shortName>AtC3H64</shortName>
    </recommendedName>
</protein>
<feature type="chain" id="PRO_0000372014" description="Zinc finger CCCH domain-containing protein 64">
    <location>
        <begin position="1"/>
        <end position="596"/>
    </location>
</feature>
<feature type="zinc finger region" description="C3H1-type 1" evidence="1">
    <location>
        <begin position="303"/>
        <end position="331"/>
    </location>
</feature>
<feature type="zinc finger region" description="C3H1-type 2" evidence="1">
    <location>
        <begin position="335"/>
        <end position="363"/>
    </location>
</feature>
<feature type="region of interest" description="Disordered" evidence="2">
    <location>
        <begin position="243"/>
        <end position="263"/>
    </location>
</feature>
<feature type="region of interest" description="Disordered" evidence="2">
    <location>
        <begin position="272"/>
        <end position="291"/>
    </location>
</feature>
<dbReference type="EMBL" id="AB024035">
    <property type="protein sequence ID" value="BAA97020.1"/>
    <property type="status" value="ALT_SEQ"/>
    <property type="molecule type" value="Genomic_DNA"/>
</dbReference>
<dbReference type="EMBL" id="CP002688">
    <property type="protein sequence ID" value="AED96821.1"/>
    <property type="molecule type" value="Genomic_DNA"/>
</dbReference>
<dbReference type="EMBL" id="BT002740">
    <property type="protein sequence ID" value="AAO22569.1"/>
    <property type="molecule type" value="mRNA"/>
</dbReference>
<dbReference type="RefSeq" id="NP_974945.2">
    <molecule id="Q84WU9-1"/>
    <property type="nucleotide sequence ID" value="NM_203216.3"/>
</dbReference>
<dbReference type="SMR" id="Q84WU9"/>
<dbReference type="BioGRID" id="21036">
    <property type="interactions" value="1"/>
</dbReference>
<dbReference type="FunCoup" id="Q84WU9">
    <property type="interactions" value="4755"/>
</dbReference>
<dbReference type="IntAct" id="Q84WU9">
    <property type="interactions" value="1"/>
</dbReference>
<dbReference type="STRING" id="3702.Q84WU9"/>
<dbReference type="GlyGen" id="Q84WU9">
    <property type="glycosylation" value="1 site"/>
</dbReference>
<dbReference type="PaxDb" id="3702-AT5G56900.2"/>
<dbReference type="ProteomicsDB" id="240491">
    <molecule id="Q84WU9-1"/>
</dbReference>
<dbReference type="EnsemblPlants" id="AT5G56900.2">
    <molecule id="Q84WU9-1"/>
    <property type="protein sequence ID" value="AT5G56900.2"/>
    <property type="gene ID" value="AT5G56900"/>
</dbReference>
<dbReference type="GeneID" id="835792"/>
<dbReference type="Gramene" id="AT5G56900.2">
    <molecule id="Q84WU9-1"/>
    <property type="protein sequence ID" value="AT5G56900.2"/>
    <property type="gene ID" value="AT5G56900"/>
</dbReference>
<dbReference type="KEGG" id="ath:AT5G56900"/>
<dbReference type="Araport" id="AT5G56900"/>
<dbReference type="TAIR" id="AT5G56900"/>
<dbReference type="eggNOG" id="KOG2476">
    <property type="taxonomic scope" value="Eukaryota"/>
</dbReference>
<dbReference type="HOGENOM" id="CLU_019955_2_0_1"/>
<dbReference type="InParanoid" id="Q84WU9"/>
<dbReference type="OMA" id="IVPITHY"/>
<dbReference type="PhylomeDB" id="Q84WU9"/>
<dbReference type="PRO" id="PR:Q84WU9"/>
<dbReference type="Proteomes" id="UP000006548">
    <property type="component" value="Chromosome 5"/>
</dbReference>
<dbReference type="ExpressionAtlas" id="Q84WU9">
    <property type="expression patterns" value="baseline and differential"/>
</dbReference>
<dbReference type="GO" id="GO:0003677">
    <property type="term" value="F:DNA binding"/>
    <property type="evidence" value="ECO:0007669"/>
    <property type="project" value="UniProtKB-KW"/>
</dbReference>
<dbReference type="GO" id="GO:0008270">
    <property type="term" value="F:zinc ion binding"/>
    <property type="evidence" value="ECO:0007669"/>
    <property type="project" value="UniProtKB-KW"/>
</dbReference>
<dbReference type="CDD" id="cd07380">
    <property type="entry name" value="MPP_CWF19_N"/>
    <property type="match status" value="1"/>
</dbReference>
<dbReference type="FunFam" id="3.30.428.10:FF:000018">
    <property type="entry name" value="Zinc finger CCCH domain-containing protein 59"/>
    <property type="match status" value="1"/>
</dbReference>
<dbReference type="Gene3D" id="3.30.428.10">
    <property type="entry name" value="HIT-like"/>
    <property type="match status" value="1"/>
</dbReference>
<dbReference type="Gene3D" id="4.10.1000.10">
    <property type="entry name" value="Zinc finger, CCCH-type"/>
    <property type="match status" value="1"/>
</dbReference>
<dbReference type="InterPro" id="IPR040194">
    <property type="entry name" value="Cwf19-like"/>
</dbReference>
<dbReference type="InterPro" id="IPR006768">
    <property type="entry name" value="Cwf19-like_C_dom-1"/>
</dbReference>
<dbReference type="InterPro" id="IPR006767">
    <property type="entry name" value="Cwf19-like_C_dom-2"/>
</dbReference>
<dbReference type="InterPro" id="IPR036265">
    <property type="entry name" value="HIT-like_sf"/>
</dbReference>
<dbReference type="InterPro" id="IPR000571">
    <property type="entry name" value="Znf_CCCH"/>
</dbReference>
<dbReference type="InterPro" id="IPR036855">
    <property type="entry name" value="Znf_CCCH_sf"/>
</dbReference>
<dbReference type="PANTHER" id="PTHR12072">
    <property type="entry name" value="CWF19, CELL CYCLE CONTROL PROTEIN"/>
    <property type="match status" value="1"/>
</dbReference>
<dbReference type="PANTHER" id="PTHR12072:SF4">
    <property type="entry name" value="CWF19-LIKE PROTEIN 1"/>
    <property type="match status" value="1"/>
</dbReference>
<dbReference type="Pfam" id="PF04677">
    <property type="entry name" value="CwfJ_C_1"/>
    <property type="match status" value="1"/>
</dbReference>
<dbReference type="Pfam" id="PF04676">
    <property type="entry name" value="CwfJ_C_2"/>
    <property type="match status" value="1"/>
</dbReference>
<dbReference type="SMART" id="SM00356">
    <property type="entry name" value="ZnF_C3H1"/>
    <property type="match status" value="2"/>
</dbReference>
<dbReference type="SUPFAM" id="SSF90229">
    <property type="entry name" value="CCCH zinc finger"/>
    <property type="match status" value="1"/>
</dbReference>
<dbReference type="SUPFAM" id="SSF54197">
    <property type="entry name" value="HIT-like"/>
    <property type="match status" value="1"/>
</dbReference>
<dbReference type="PROSITE" id="PS50103">
    <property type="entry name" value="ZF_C3H1"/>
    <property type="match status" value="2"/>
</dbReference>
<reference key="1">
    <citation type="journal article" date="2000" name="DNA Res.">
        <title>Structural analysis of Arabidopsis thaliana chromosome 5. X. Sequence features of the regions of 3,076,755 bp covered by sixty P1 and TAC clones.</title>
        <authorList>
            <person name="Sato S."/>
            <person name="Nakamura Y."/>
            <person name="Kaneko T."/>
            <person name="Katoh T."/>
            <person name="Asamizu E."/>
            <person name="Kotani H."/>
            <person name="Tabata S."/>
        </authorList>
    </citation>
    <scope>NUCLEOTIDE SEQUENCE [LARGE SCALE GENOMIC DNA]</scope>
    <source>
        <strain>cv. Columbia</strain>
    </source>
</reference>
<reference key="2">
    <citation type="journal article" date="2017" name="Plant J.">
        <title>Araport11: a complete reannotation of the Arabidopsis thaliana reference genome.</title>
        <authorList>
            <person name="Cheng C.Y."/>
            <person name="Krishnakumar V."/>
            <person name="Chan A.P."/>
            <person name="Thibaud-Nissen F."/>
            <person name="Schobel S."/>
            <person name="Town C.D."/>
        </authorList>
    </citation>
    <scope>GENOME REANNOTATION</scope>
    <source>
        <strain>cv. Columbia</strain>
    </source>
</reference>
<reference key="3">
    <citation type="journal article" date="2003" name="Science">
        <title>Empirical analysis of transcriptional activity in the Arabidopsis genome.</title>
        <authorList>
            <person name="Yamada K."/>
            <person name="Lim J."/>
            <person name="Dale J.M."/>
            <person name="Chen H."/>
            <person name="Shinn P."/>
            <person name="Palm C.J."/>
            <person name="Southwick A.M."/>
            <person name="Wu H.C."/>
            <person name="Kim C.J."/>
            <person name="Nguyen M."/>
            <person name="Pham P.K."/>
            <person name="Cheuk R.F."/>
            <person name="Karlin-Newmann G."/>
            <person name="Liu S.X."/>
            <person name="Lam B."/>
            <person name="Sakano H."/>
            <person name="Wu T."/>
            <person name="Yu G."/>
            <person name="Miranda M."/>
            <person name="Quach H.L."/>
            <person name="Tripp M."/>
            <person name="Chang C.H."/>
            <person name="Lee J.M."/>
            <person name="Toriumi M.J."/>
            <person name="Chan M.M."/>
            <person name="Tang C.C."/>
            <person name="Onodera C.S."/>
            <person name="Deng J.M."/>
            <person name="Akiyama K."/>
            <person name="Ansari Y."/>
            <person name="Arakawa T."/>
            <person name="Banh J."/>
            <person name="Banno F."/>
            <person name="Bowser L."/>
            <person name="Brooks S.Y."/>
            <person name="Carninci P."/>
            <person name="Chao Q."/>
            <person name="Choy N."/>
            <person name="Enju A."/>
            <person name="Goldsmith A.D."/>
            <person name="Gurjal M."/>
            <person name="Hansen N.F."/>
            <person name="Hayashizaki Y."/>
            <person name="Johnson-Hopson C."/>
            <person name="Hsuan V.W."/>
            <person name="Iida K."/>
            <person name="Karnes M."/>
            <person name="Khan S."/>
            <person name="Koesema E."/>
            <person name="Ishida J."/>
            <person name="Jiang P.X."/>
            <person name="Jones T."/>
            <person name="Kawai J."/>
            <person name="Kamiya A."/>
            <person name="Meyers C."/>
            <person name="Nakajima M."/>
            <person name="Narusaka M."/>
            <person name="Seki M."/>
            <person name="Sakurai T."/>
            <person name="Satou M."/>
            <person name="Tamse R."/>
            <person name="Vaysberg M."/>
            <person name="Wallender E.K."/>
            <person name="Wong C."/>
            <person name="Yamamura Y."/>
            <person name="Yuan S."/>
            <person name="Shinozaki K."/>
            <person name="Davis R.W."/>
            <person name="Theologis A."/>
            <person name="Ecker J.R."/>
        </authorList>
    </citation>
    <scope>NUCLEOTIDE SEQUENCE [LARGE SCALE MRNA]</scope>
    <source>
        <strain>cv. Columbia</strain>
    </source>
</reference>
<reference key="4">
    <citation type="journal article" date="2008" name="BMC Genomics">
        <title>Genome-wide analysis of CCCH zinc finger family in Arabidopsis and rice.</title>
        <authorList>
            <person name="Wang D."/>
            <person name="Guo Y."/>
            <person name="Wu C."/>
            <person name="Yang G."/>
            <person name="Li Y."/>
            <person name="Zheng C."/>
        </authorList>
    </citation>
    <scope>NOMENCLATURE</scope>
</reference>
<name>C3H64_ARATH</name>
<evidence type="ECO:0000255" key="1">
    <source>
        <dbReference type="PROSITE-ProRule" id="PRU00723"/>
    </source>
</evidence>
<evidence type="ECO:0000256" key="2">
    <source>
        <dbReference type="SAM" id="MobiDB-lite"/>
    </source>
</evidence>
<evidence type="ECO:0000305" key="3"/>
<organism>
    <name type="scientific">Arabidopsis thaliana</name>
    <name type="common">Mouse-ear cress</name>
    <dbReference type="NCBI Taxonomy" id="3702"/>
    <lineage>
        <taxon>Eukaryota</taxon>
        <taxon>Viridiplantae</taxon>
        <taxon>Streptophyta</taxon>
        <taxon>Embryophyta</taxon>
        <taxon>Tracheophyta</taxon>
        <taxon>Spermatophyta</taxon>
        <taxon>Magnoliopsida</taxon>
        <taxon>eudicotyledons</taxon>
        <taxon>Gunneridae</taxon>
        <taxon>Pentapetalae</taxon>
        <taxon>rosids</taxon>
        <taxon>malvids</taxon>
        <taxon>Brassicales</taxon>
        <taxon>Brassicaceae</taxon>
        <taxon>Camelineae</taxon>
        <taxon>Arabidopsis</taxon>
    </lineage>
</organism>
<sequence>MAPRILLCGDPLGRLNQLFKRVQSVSKSAGPFDALICVGQFFPDSPEILDEFLDYVEGRAQVPIPTYFTGDYGVVAPKILSTTSKKAENQGFKMDGLEVCHNLFWLRGSGKFSLHGLSVAYLSGRQSSESQFGKYSQDDVDALRALAEEPGGVDLFLTNEWPAGVTNRAAVSDIPVGISDSSCSDSTVSELVMEVKPRYHIAGSMGVFYAREPYLNAESTHVTRFIGLAQVGNKNKQKFLHALSPTPTSTMSPAELSAKPPKTTLWPYNLQDGAAESKKRPNDSDSDSQYWRYDVPKRQKSGSQGEKLCFKFVCSGSCPRGEDCHFQHNAEAREQCRRGVCLDLIIKGKCEKGPECSYKHEFQDESSIQRKPRSENANRSKECWFCLSSPSVESHLIVSVGESFYCALPKGSLVEDHILIIPIEHLPNTLVLSPEVESELSRYQNGLRNCYKSQGNDAVFFELVSKRVSHANLQVVPVPSSRARLLPNIFSLAAEKLGFKLVTKKFNDSTDGRKYLQKEYNAALGLFYVELPDGTVLSHTLEENEVFPAQFGREVLAGLLKIPDRADWRNCKISQEEEAKLAEDFKKQFQEFDPCQ</sequence>
<proteinExistence type="evidence at transcript level"/>
<keyword id="KW-0025">Alternative splicing</keyword>
<keyword id="KW-0238">DNA-binding</keyword>
<keyword id="KW-0479">Metal-binding</keyword>
<keyword id="KW-1185">Reference proteome</keyword>
<keyword id="KW-0677">Repeat</keyword>
<keyword id="KW-0862">Zinc</keyword>
<keyword id="KW-0863">Zinc-finger</keyword>
<accession>Q84WU9</accession>
<accession>Q9LTT0</accession>